<reference key="1">
    <citation type="journal article" date="2000" name="Nature">
        <title>The genome sequence of the food-borne pathogen Campylobacter jejuni reveals hypervariable sequences.</title>
        <authorList>
            <person name="Parkhill J."/>
            <person name="Wren B.W."/>
            <person name="Mungall K.L."/>
            <person name="Ketley J.M."/>
            <person name="Churcher C.M."/>
            <person name="Basham D."/>
            <person name="Chillingworth T."/>
            <person name="Davies R.M."/>
            <person name="Feltwell T."/>
            <person name="Holroyd S."/>
            <person name="Jagels K."/>
            <person name="Karlyshev A.V."/>
            <person name="Moule S."/>
            <person name="Pallen M.J."/>
            <person name="Penn C.W."/>
            <person name="Quail M.A."/>
            <person name="Rajandream M.A."/>
            <person name="Rutherford K.M."/>
            <person name="van Vliet A.H.M."/>
            <person name="Whitehead S."/>
            <person name="Barrell B.G."/>
        </authorList>
    </citation>
    <scope>NUCLEOTIDE SEQUENCE [LARGE SCALE GENOMIC DNA]</scope>
    <source>
        <strain>ATCC 700819 / NCTC 11168</strain>
    </source>
</reference>
<feature type="chain" id="PRO_0000303310" description="tRNA N6-adenosine threonylcarbamoyltransferase">
    <location>
        <begin position="1"/>
        <end position="335"/>
    </location>
</feature>
<feature type="binding site" evidence="1">
    <location>
        <position position="110"/>
    </location>
    <ligand>
        <name>Fe cation</name>
        <dbReference type="ChEBI" id="CHEBI:24875"/>
    </ligand>
</feature>
<feature type="binding site" evidence="1">
    <location>
        <position position="114"/>
    </location>
    <ligand>
        <name>Fe cation</name>
        <dbReference type="ChEBI" id="CHEBI:24875"/>
    </ligand>
</feature>
<feature type="binding site" evidence="1">
    <location>
        <begin position="132"/>
        <end position="136"/>
    </location>
    <ligand>
        <name>substrate</name>
    </ligand>
</feature>
<feature type="binding site" evidence="1">
    <location>
        <position position="165"/>
    </location>
    <ligand>
        <name>substrate</name>
    </ligand>
</feature>
<feature type="binding site" evidence="1">
    <location>
        <position position="178"/>
    </location>
    <ligand>
        <name>substrate</name>
    </ligand>
</feature>
<feature type="binding site" evidence="1">
    <location>
        <position position="271"/>
    </location>
    <ligand>
        <name>substrate</name>
    </ligand>
</feature>
<feature type="binding site" evidence="1">
    <location>
        <position position="299"/>
    </location>
    <ligand>
        <name>Fe cation</name>
        <dbReference type="ChEBI" id="CHEBI:24875"/>
    </ligand>
</feature>
<name>TSAD_CAMJE</name>
<accession>Q0P8R5</accession>
<protein>
    <recommendedName>
        <fullName evidence="1">tRNA N6-adenosine threonylcarbamoyltransferase</fullName>
        <ecNumber evidence="1">2.3.1.234</ecNumber>
    </recommendedName>
    <alternativeName>
        <fullName evidence="1">N6-L-threonylcarbamoyladenine synthase</fullName>
        <shortName evidence="1">t(6)A synthase</shortName>
    </alternativeName>
    <alternativeName>
        <fullName evidence="1">t(6)A37 threonylcarbamoyladenosine biosynthesis protein TsaD</fullName>
    </alternativeName>
    <alternativeName>
        <fullName evidence="1">tRNA threonylcarbamoyladenosine biosynthesis protein TsaD</fullName>
    </alternativeName>
</protein>
<gene>
    <name evidence="1" type="primary">tsaD</name>
    <name type="synonym">gcp</name>
    <name type="ordered locus">Cj1344c</name>
</gene>
<proteinExistence type="inferred from homology"/>
<evidence type="ECO:0000255" key="1">
    <source>
        <dbReference type="HAMAP-Rule" id="MF_01445"/>
    </source>
</evidence>
<dbReference type="EC" id="2.3.1.234" evidence="1"/>
<dbReference type="EMBL" id="AL111168">
    <property type="protein sequence ID" value="CAL35456.1"/>
    <property type="molecule type" value="Genomic_DNA"/>
</dbReference>
<dbReference type="PIR" id="E81278">
    <property type="entry name" value="E81278"/>
</dbReference>
<dbReference type="RefSeq" id="WP_002864246.1">
    <property type="nucleotide sequence ID" value="NZ_SZUC01000003.1"/>
</dbReference>
<dbReference type="RefSeq" id="YP_002344732.1">
    <property type="nucleotide sequence ID" value="NC_002163.1"/>
</dbReference>
<dbReference type="SMR" id="Q0P8R5"/>
<dbReference type="STRING" id="192222.Cj1344c"/>
<dbReference type="PaxDb" id="192222-Cj1344c"/>
<dbReference type="EnsemblBacteria" id="CAL35456">
    <property type="protein sequence ID" value="CAL35456"/>
    <property type="gene ID" value="Cj1344c"/>
</dbReference>
<dbReference type="GeneID" id="905636"/>
<dbReference type="KEGG" id="cje:Cj1344c"/>
<dbReference type="PATRIC" id="fig|192222.6.peg.1326"/>
<dbReference type="eggNOG" id="COG0533">
    <property type="taxonomic scope" value="Bacteria"/>
</dbReference>
<dbReference type="HOGENOM" id="CLU_023208_0_3_7"/>
<dbReference type="OrthoDB" id="9806197at2"/>
<dbReference type="Proteomes" id="UP000000799">
    <property type="component" value="Chromosome"/>
</dbReference>
<dbReference type="GO" id="GO:0005737">
    <property type="term" value="C:cytoplasm"/>
    <property type="evidence" value="ECO:0007669"/>
    <property type="project" value="UniProtKB-SubCell"/>
</dbReference>
<dbReference type="GO" id="GO:0005506">
    <property type="term" value="F:iron ion binding"/>
    <property type="evidence" value="ECO:0007669"/>
    <property type="project" value="UniProtKB-UniRule"/>
</dbReference>
<dbReference type="GO" id="GO:0061711">
    <property type="term" value="F:N(6)-L-threonylcarbamoyladenine synthase activity"/>
    <property type="evidence" value="ECO:0007669"/>
    <property type="project" value="UniProtKB-EC"/>
</dbReference>
<dbReference type="GO" id="GO:0002949">
    <property type="term" value="P:tRNA threonylcarbamoyladenosine modification"/>
    <property type="evidence" value="ECO:0007669"/>
    <property type="project" value="UniProtKB-UniRule"/>
</dbReference>
<dbReference type="Gene3D" id="3.30.420.40">
    <property type="match status" value="2"/>
</dbReference>
<dbReference type="HAMAP" id="MF_01445">
    <property type="entry name" value="TsaD"/>
    <property type="match status" value="1"/>
</dbReference>
<dbReference type="InterPro" id="IPR043129">
    <property type="entry name" value="ATPase_NBD"/>
</dbReference>
<dbReference type="InterPro" id="IPR000905">
    <property type="entry name" value="Gcp-like_dom"/>
</dbReference>
<dbReference type="InterPro" id="IPR017861">
    <property type="entry name" value="KAE1/TsaD"/>
</dbReference>
<dbReference type="InterPro" id="IPR017860">
    <property type="entry name" value="Peptidase_M22_CS"/>
</dbReference>
<dbReference type="InterPro" id="IPR022450">
    <property type="entry name" value="TsaD"/>
</dbReference>
<dbReference type="NCBIfam" id="TIGR00329">
    <property type="entry name" value="gcp_kae1"/>
    <property type="match status" value="1"/>
</dbReference>
<dbReference type="NCBIfam" id="TIGR03723">
    <property type="entry name" value="T6A_TsaD_YgjD"/>
    <property type="match status" value="1"/>
</dbReference>
<dbReference type="PANTHER" id="PTHR11735">
    <property type="entry name" value="TRNA N6-ADENOSINE THREONYLCARBAMOYLTRANSFERASE"/>
    <property type="match status" value="1"/>
</dbReference>
<dbReference type="PANTHER" id="PTHR11735:SF6">
    <property type="entry name" value="TRNA N6-ADENOSINE THREONYLCARBAMOYLTRANSFERASE, MITOCHONDRIAL"/>
    <property type="match status" value="1"/>
</dbReference>
<dbReference type="Pfam" id="PF00814">
    <property type="entry name" value="TsaD"/>
    <property type="match status" value="1"/>
</dbReference>
<dbReference type="PRINTS" id="PR00789">
    <property type="entry name" value="OSIALOPTASE"/>
</dbReference>
<dbReference type="SUPFAM" id="SSF53067">
    <property type="entry name" value="Actin-like ATPase domain"/>
    <property type="match status" value="2"/>
</dbReference>
<dbReference type="PROSITE" id="PS01016">
    <property type="entry name" value="GLYCOPROTEASE"/>
    <property type="match status" value="1"/>
</dbReference>
<comment type="function">
    <text evidence="1">Required for the formation of a threonylcarbamoyl group on adenosine at position 37 (t(6)A37) in tRNAs that read codons beginning with adenine. Is involved in the transfer of the threonylcarbamoyl moiety of threonylcarbamoyl-AMP (TC-AMP) to the N6 group of A37, together with TsaE and TsaB. TsaD likely plays a direct catalytic role in this reaction.</text>
</comment>
<comment type="catalytic activity">
    <reaction evidence="1">
        <text>L-threonylcarbamoyladenylate + adenosine(37) in tRNA = N(6)-L-threonylcarbamoyladenosine(37) in tRNA + AMP + H(+)</text>
        <dbReference type="Rhea" id="RHEA:37059"/>
        <dbReference type="Rhea" id="RHEA-COMP:10162"/>
        <dbReference type="Rhea" id="RHEA-COMP:10163"/>
        <dbReference type="ChEBI" id="CHEBI:15378"/>
        <dbReference type="ChEBI" id="CHEBI:73682"/>
        <dbReference type="ChEBI" id="CHEBI:74411"/>
        <dbReference type="ChEBI" id="CHEBI:74418"/>
        <dbReference type="ChEBI" id="CHEBI:456215"/>
        <dbReference type="EC" id="2.3.1.234"/>
    </reaction>
</comment>
<comment type="cofactor">
    <cofactor evidence="1">
        <name>Fe(2+)</name>
        <dbReference type="ChEBI" id="CHEBI:29033"/>
    </cofactor>
    <text evidence="1">Binds 1 Fe(2+) ion per subunit.</text>
</comment>
<comment type="subcellular location">
    <subcellularLocation>
        <location evidence="1">Cytoplasm</location>
    </subcellularLocation>
</comment>
<comment type="similarity">
    <text evidence="1">Belongs to the KAE1 / TsaD family.</text>
</comment>
<keyword id="KW-0012">Acyltransferase</keyword>
<keyword id="KW-0963">Cytoplasm</keyword>
<keyword id="KW-0408">Iron</keyword>
<keyword id="KW-0479">Metal-binding</keyword>
<keyword id="KW-1185">Reference proteome</keyword>
<keyword id="KW-0808">Transferase</keyword>
<keyword id="KW-0819">tRNA processing</keyword>
<organism>
    <name type="scientific">Campylobacter jejuni subsp. jejuni serotype O:2 (strain ATCC 700819 / NCTC 11168)</name>
    <dbReference type="NCBI Taxonomy" id="192222"/>
    <lineage>
        <taxon>Bacteria</taxon>
        <taxon>Pseudomonadati</taxon>
        <taxon>Campylobacterota</taxon>
        <taxon>Epsilonproteobacteria</taxon>
        <taxon>Campylobacterales</taxon>
        <taxon>Campylobacteraceae</taxon>
        <taxon>Campylobacter</taxon>
    </lineage>
</organism>
<sequence length="335" mass="37066">MKNLILAIESSCDDSSIAIIDKNTLECKFHKKISQELDHSIYGGVVPELAARLHSEALPKMLKQCKEHFKNLCAIAVTNEPGLSVSLLSGISMAKTLASALNLPLIPINHLKGHIYSLFLEEKISLDMGILLVSGGHTMVLYLKDDASLELLASTNDDSFGESFDKVAKMMNLGYPGGVIIENLAKNAKLKNISFNTPLKHSKELAFSFSGLKNAVRLEILKHENLNEDTKAEIAYAFENTACDHIMDKLEKIFNLYKFKNFGVVGGASANLNLRSRLQNLCQKYNANLKLAPLKFCSDNALMIARAAVDAYEKKEFVSVEEDILSPKNKNFSRI</sequence>